<organism>
    <name type="scientific">Blochmanniella floridana</name>
    <dbReference type="NCBI Taxonomy" id="203907"/>
    <lineage>
        <taxon>Bacteria</taxon>
        <taxon>Pseudomonadati</taxon>
        <taxon>Pseudomonadota</taxon>
        <taxon>Gammaproteobacteria</taxon>
        <taxon>Enterobacterales</taxon>
        <taxon>Enterobacteriaceae</taxon>
        <taxon>ant endosymbionts</taxon>
        <taxon>Candidatus Blochmanniella</taxon>
    </lineage>
</organism>
<protein>
    <recommendedName>
        <fullName evidence="1">Glutamate--tRNA ligase</fullName>
        <ecNumber evidence="1">6.1.1.17</ecNumber>
    </recommendedName>
    <alternativeName>
        <fullName evidence="1">Glutamyl-tRNA synthetase</fullName>
        <shortName evidence="1">GluRS</shortName>
    </alternativeName>
</protein>
<name>SYE_BLOFL</name>
<evidence type="ECO:0000255" key="1">
    <source>
        <dbReference type="HAMAP-Rule" id="MF_00022"/>
    </source>
</evidence>
<sequence length="483" mass="56731">MNIKTRFAPSPTGYLHIGNIRTALYAWLFARKQGGKFVLRIEDTNTVHLDNDEVIKNIISIMKWLRLDWDEGPYFQTKRLNRYNSIIYDMLQNNIAYRCFCSEERLSLLRLNQMKSGEKPKYDGRCRTICMFKNNAMLNTNRIIDSDKGSYVVRFCNPDVGKVSFYDQVRGMITFDNCELDDIIIQRSNGVPTYNFCVVVDDMDMNITHVVRGEEHINNTPRQINILKALRAEIPQYIHVPMILDQNRKKLSKRHGKSGIMQYRNDGFLPEAILNCLVRLGWSYGNQEIFSMDQMKKYFDFSEIHKSASVFDINKLMWFNHYYINHLPVNHIIKYLSEYIQIQNISDIDSVKLIDLVNLFSKRSHTLKEMIFNYRYLCKDFNIFEKKIAKKYLIPTMINPLKFFRKKLNNISNWTIKTVQTTIKETVHELNMNMNMVGMALRVALIGSDKSPSMSIVVYIIGKCQVLDRIDRAIDYINSLSHD</sequence>
<accession>Q7VRU3</accession>
<proteinExistence type="inferred from homology"/>
<comment type="function">
    <text evidence="1">Catalyzes the attachment of glutamate to tRNA(Glu) in a two-step reaction: glutamate is first activated by ATP to form Glu-AMP and then transferred to the acceptor end of tRNA(Glu).</text>
</comment>
<comment type="catalytic activity">
    <reaction evidence="1">
        <text>tRNA(Glu) + L-glutamate + ATP = L-glutamyl-tRNA(Glu) + AMP + diphosphate</text>
        <dbReference type="Rhea" id="RHEA:23540"/>
        <dbReference type="Rhea" id="RHEA-COMP:9663"/>
        <dbReference type="Rhea" id="RHEA-COMP:9680"/>
        <dbReference type="ChEBI" id="CHEBI:29985"/>
        <dbReference type="ChEBI" id="CHEBI:30616"/>
        <dbReference type="ChEBI" id="CHEBI:33019"/>
        <dbReference type="ChEBI" id="CHEBI:78442"/>
        <dbReference type="ChEBI" id="CHEBI:78520"/>
        <dbReference type="ChEBI" id="CHEBI:456215"/>
        <dbReference type="EC" id="6.1.1.17"/>
    </reaction>
</comment>
<comment type="subunit">
    <text evidence="1">Monomer.</text>
</comment>
<comment type="subcellular location">
    <subcellularLocation>
        <location evidence="1">Cytoplasm</location>
    </subcellularLocation>
</comment>
<comment type="similarity">
    <text evidence="1">Belongs to the class-I aminoacyl-tRNA synthetase family. Glutamate--tRNA ligase type 1 subfamily.</text>
</comment>
<gene>
    <name evidence="1" type="primary">gltX</name>
    <name type="ordered locus">Bfl504</name>
</gene>
<feature type="chain" id="PRO_0000119535" description="Glutamate--tRNA ligase">
    <location>
        <begin position="1"/>
        <end position="483"/>
    </location>
</feature>
<feature type="short sequence motif" description="'HIGH' region" evidence="1">
    <location>
        <begin position="9"/>
        <end position="19"/>
    </location>
</feature>
<feature type="short sequence motif" description="'KMSKS' region" evidence="1">
    <location>
        <begin position="250"/>
        <end position="254"/>
    </location>
</feature>
<feature type="binding site" evidence="1">
    <location>
        <position position="253"/>
    </location>
    <ligand>
        <name>ATP</name>
        <dbReference type="ChEBI" id="CHEBI:30616"/>
    </ligand>
</feature>
<keyword id="KW-0030">Aminoacyl-tRNA synthetase</keyword>
<keyword id="KW-0067">ATP-binding</keyword>
<keyword id="KW-0963">Cytoplasm</keyword>
<keyword id="KW-0436">Ligase</keyword>
<keyword id="KW-0547">Nucleotide-binding</keyword>
<keyword id="KW-0648">Protein biosynthesis</keyword>
<keyword id="KW-1185">Reference proteome</keyword>
<dbReference type="EC" id="6.1.1.17" evidence="1"/>
<dbReference type="EMBL" id="BX248583">
    <property type="protein sequence ID" value="CAD83192.1"/>
    <property type="molecule type" value="Genomic_DNA"/>
</dbReference>
<dbReference type="SMR" id="Q7VRU3"/>
<dbReference type="STRING" id="203907.Bfl504"/>
<dbReference type="KEGG" id="bfl:Bfl504"/>
<dbReference type="eggNOG" id="COG0008">
    <property type="taxonomic scope" value="Bacteria"/>
</dbReference>
<dbReference type="HOGENOM" id="CLU_015768_6_3_6"/>
<dbReference type="OrthoDB" id="9807503at2"/>
<dbReference type="Proteomes" id="UP000002192">
    <property type="component" value="Chromosome"/>
</dbReference>
<dbReference type="GO" id="GO:0005829">
    <property type="term" value="C:cytosol"/>
    <property type="evidence" value="ECO:0007669"/>
    <property type="project" value="TreeGrafter"/>
</dbReference>
<dbReference type="GO" id="GO:0005524">
    <property type="term" value="F:ATP binding"/>
    <property type="evidence" value="ECO:0007669"/>
    <property type="project" value="UniProtKB-UniRule"/>
</dbReference>
<dbReference type="GO" id="GO:0004818">
    <property type="term" value="F:glutamate-tRNA ligase activity"/>
    <property type="evidence" value="ECO:0007669"/>
    <property type="project" value="UniProtKB-UniRule"/>
</dbReference>
<dbReference type="GO" id="GO:0000049">
    <property type="term" value="F:tRNA binding"/>
    <property type="evidence" value="ECO:0007669"/>
    <property type="project" value="InterPro"/>
</dbReference>
<dbReference type="GO" id="GO:0008270">
    <property type="term" value="F:zinc ion binding"/>
    <property type="evidence" value="ECO:0007669"/>
    <property type="project" value="InterPro"/>
</dbReference>
<dbReference type="GO" id="GO:0006424">
    <property type="term" value="P:glutamyl-tRNA aminoacylation"/>
    <property type="evidence" value="ECO:0007669"/>
    <property type="project" value="UniProtKB-UniRule"/>
</dbReference>
<dbReference type="CDD" id="cd00808">
    <property type="entry name" value="GluRS_core"/>
    <property type="match status" value="1"/>
</dbReference>
<dbReference type="FunFam" id="3.40.50.620:FF:000007">
    <property type="entry name" value="Glutamate--tRNA ligase"/>
    <property type="match status" value="1"/>
</dbReference>
<dbReference type="Gene3D" id="1.10.10.350">
    <property type="match status" value="1"/>
</dbReference>
<dbReference type="Gene3D" id="3.40.50.620">
    <property type="entry name" value="HUPs"/>
    <property type="match status" value="1"/>
</dbReference>
<dbReference type="HAMAP" id="MF_00022">
    <property type="entry name" value="Glu_tRNA_synth_type1"/>
    <property type="match status" value="1"/>
</dbReference>
<dbReference type="InterPro" id="IPR045462">
    <property type="entry name" value="aa-tRNA-synth_I_cd-bd"/>
</dbReference>
<dbReference type="InterPro" id="IPR020751">
    <property type="entry name" value="aa-tRNA-synth_I_codon-bd_sub2"/>
</dbReference>
<dbReference type="InterPro" id="IPR001412">
    <property type="entry name" value="aa-tRNA-synth_I_CS"/>
</dbReference>
<dbReference type="InterPro" id="IPR008925">
    <property type="entry name" value="aa_tRNA-synth_I_cd-bd_sf"/>
</dbReference>
<dbReference type="InterPro" id="IPR004527">
    <property type="entry name" value="Glu-tRNA-ligase_bac/mito"/>
</dbReference>
<dbReference type="InterPro" id="IPR000924">
    <property type="entry name" value="Glu/Gln-tRNA-synth"/>
</dbReference>
<dbReference type="InterPro" id="IPR020058">
    <property type="entry name" value="Glu/Gln-tRNA-synth_Ib_cat-dom"/>
</dbReference>
<dbReference type="InterPro" id="IPR049940">
    <property type="entry name" value="GluQ/Sye"/>
</dbReference>
<dbReference type="InterPro" id="IPR033910">
    <property type="entry name" value="GluRS_core"/>
</dbReference>
<dbReference type="InterPro" id="IPR014729">
    <property type="entry name" value="Rossmann-like_a/b/a_fold"/>
</dbReference>
<dbReference type="NCBIfam" id="TIGR00464">
    <property type="entry name" value="gltX_bact"/>
    <property type="match status" value="1"/>
</dbReference>
<dbReference type="PANTHER" id="PTHR43311">
    <property type="entry name" value="GLUTAMATE--TRNA LIGASE"/>
    <property type="match status" value="1"/>
</dbReference>
<dbReference type="PANTHER" id="PTHR43311:SF2">
    <property type="entry name" value="GLUTAMATE--TRNA LIGASE, MITOCHONDRIAL-RELATED"/>
    <property type="match status" value="1"/>
</dbReference>
<dbReference type="Pfam" id="PF19269">
    <property type="entry name" value="Anticodon_2"/>
    <property type="match status" value="1"/>
</dbReference>
<dbReference type="Pfam" id="PF00749">
    <property type="entry name" value="tRNA-synt_1c"/>
    <property type="match status" value="1"/>
</dbReference>
<dbReference type="PRINTS" id="PR00987">
    <property type="entry name" value="TRNASYNTHGLU"/>
</dbReference>
<dbReference type="SUPFAM" id="SSF48163">
    <property type="entry name" value="An anticodon-binding domain of class I aminoacyl-tRNA synthetases"/>
    <property type="match status" value="1"/>
</dbReference>
<dbReference type="SUPFAM" id="SSF52374">
    <property type="entry name" value="Nucleotidylyl transferase"/>
    <property type="match status" value="1"/>
</dbReference>
<dbReference type="PROSITE" id="PS00178">
    <property type="entry name" value="AA_TRNA_LIGASE_I"/>
    <property type="match status" value="1"/>
</dbReference>
<reference key="1">
    <citation type="journal article" date="2003" name="Proc. Natl. Acad. Sci. U.S.A.">
        <title>The genome sequence of Blochmannia floridanus: comparative analysis of reduced genomes.</title>
        <authorList>
            <person name="Gil R."/>
            <person name="Silva F.J."/>
            <person name="Zientz E."/>
            <person name="Delmotte F."/>
            <person name="Gonzalez-Candelas F."/>
            <person name="Latorre A."/>
            <person name="Rausell C."/>
            <person name="Kamerbeek J."/>
            <person name="Gadau J."/>
            <person name="Hoelldobler B."/>
            <person name="van Ham R.C.H.J."/>
            <person name="Gross R."/>
            <person name="Moya A."/>
        </authorList>
    </citation>
    <scope>NUCLEOTIDE SEQUENCE [LARGE SCALE GENOMIC DNA]</scope>
</reference>